<sequence length="283" mass="31994">MNWTGLYTLLSGVNRHSTAIGRVWLSVIFIFRIMVLVVAAESVWGDEKSSFICNTLQPGCNSVCYDQFFPISHVRLWSLQLILVSTPALLVAMHVAHQQHIEKKMLRLEGHGDPLHLEEVKRHKVHISGTLWWAYVISVVFRLLFEAVFMYVFYLLYPGYAMVRLVKCDVYPCPNTVDCFVSRPTEKTVFTVFMLAASGICIILNVAEVVYLIIRACARRAQRRSNPPSRKGSGFGHRLSPEYKQNEINKLLSEQDGSLKDILRRSPGTGAGLAEKSDRCSAC</sequence>
<accession>Q60HF7</accession>
<gene>
    <name type="primary">GJB1</name>
    <name type="ORF">QorA-11550</name>
</gene>
<dbReference type="EMBL" id="AB125170">
    <property type="protein sequence ID" value="BAD51958.1"/>
    <property type="molecule type" value="mRNA"/>
</dbReference>
<dbReference type="SMR" id="Q60HF7"/>
<dbReference type="eggNOG" id="ENOG502R1QN">
    <property type="taxonomic scope" value="Eukaryota"/>
</dbReference>
<dbReference type="Proteomes" id="UP000233100">
    <property type="component" value="Unplaced"/>
</dbReference>
<dbReference type="GO" id="GO:0005922">
    <property type="term" value="C:connexin complex"/>
    <property type="evidence" value="ECO:0007669"/>
    <property type="project" value="InterPro"/>
</dbReference>
<dbReference type="GO" id="GO:0005243">
    <property type="term" value="F:gap junction channel activity"/>
    <property type="evidence" value="ECO:0007669"/>
    <property type="project" value="TreeGrafter"/>
</dbReference>
<dbReference type="GO" id="GO:0007267">
    <property type="term" value="P:cell-cell signaling"/>
    <property type="evidence" value="ECO:0007669"/>
    <property type="project" value="TreeGrafter"/>
</dbReference>
<dbReference type="FunFam" id="1.20.1440.80:FF:000001">
    <property type="entry name" value="Gap junction alpha-1"/>
    <property type="match status" value="1"/>
</dbReference>
<dbReference type="Gene3D" id="1.20.1440.80">
    <property type="entry name" value="Gap junction channel protein cysteine-rich domain"/>
    <property type="match status" value="1"/>
</dbReference>
<dbReference type="InterPro" id="IPR000500">
    <property type="entry name" value="Connexin"/>
</dbReference>
<dbReference type="InterPro" id="IPR002267">
    <property type="entry name" value="Connexin32"/>
</dbReference>
<dbReference type="InterPro" id="IPR019570">
    <property type="entry name" value="Connexin_CCC"/>
</dbReference>
<dbReference type="InterPro" id="IPR017990">
    <property type="entry name" value="Connexin_CS"/>
</dbReference>
<dbReference type="InterPro" id="IPR013092">
    <property type="entry name" value="Connexin_N"/>
</dbReference>
<dbReference type="InterPro" id="IPR038359">
    <property type="entry name" value="Connexin_N_sf"/>
</dbReference>
<dbReference type="PANTHER" id="PTHR11984">
    <property type="entry name" value="CONNEXIN"/>
    <property type="match status" value="1"/>
</dbReference>
<dbReference type="PANTHER" id="PTHR11984:SF20">
    <property type="entry name" value="GAP JUNCTION BETA-1 PROTEIN"/>
    <property type="match status" value="1"/>
</dbReference>
<dbReference type="Pfam" id="PF00029">
    <property type="entry name" value="Connexin"/>
    <property type="match status" value="1"/>
</dbReference>
<dbReference type="PRINTS" id="PR00206">
    <property type="entry name" value="CONNEXIN"/>
</dbReference>
<dbReference type="PRINTS" id="PR01138">
    <property type="entry name" value="CONNEXINB1"/>
</dbReference>
<dbReference type="SMART" id="SM00037">
    <property type="entry name" value="CNX"/>
    <property type="match status" value="1"/>
</dbReference>
<dbReference type="SMART" id="SM01089">
    <property type="entry name" value="Connexin_CCC"/>
    <property type="match status" value="1"/>
</dbReference>
<dbReference type="PROSITE" id="PS00407">
    <property type="entry name" value="CONNEXINS_1"/>
    <property type="match status" value="1"/>
</dbReference>
<dbReference type="PROSITE" id="PS00408">
    <property type="entry name" value="CONNEXINS_2"/>
    <property type="match status" value="1"/>
</dbReference>
<reference key="1">
    <citation type="submission" date="2003-10" db="EMBL/GenBank/DDBJ databases">
        <title>Isolation and characterization of cDNA for macaque neurological disease genes.</title>
        <authorList>
            <person name="Kusuda J."/>
            <person name="Osada N."/>
            <person name="Tanuma R."/>
            <person name="Hirata M."/>
            <person name="Sugano S."/>
            <person name="Hashimoto K."/>
        </authorList>
    </citation>
    <scope>NUCLEOTIDE SEQUENCE [LARGE SCALE MRNA]</scope>
    <source>
        <tissue>Occipital cortex</tissue>
    </source>
</reference>
<evidence type="ECO:0000250" key="1"/>
<evidence type="ECO:0000250" key="2">
    <source>
        <dbReference type="UniProtKB" id="P08033"/>
    </source>
</evidence>
<evidence type="ECO:0000250" key="3">
    <source>
        <dbReference type="UniProtKB" id="P08034"/>
    </source>
</evidence>
<evidence type="ECO:0000305" key="4"/>
<organism>
    <name type="scientific">Macaca fascicularis</name>
    <name type="common">Crab-eating macaque</name>
    <name type="synonym">Cynomolgus monkey</name>
    <dbReference type="NCBI Taxonomy" id="9541"/>
    <lineage>
        <taxon>Eukaryota</taxon>
        <taxon>Metazoa</taxon>
        <taxon>Chordata</taxon>
        <taxon>Craniata</taxon>
        <taxon>Vertebrata</taxon>
        <taxon>Euteleostomi</taxon>
        <taxon>Mammalia</taxon>
        <taxon>Eutheria</taxon>
        <taxon>Euarchontoglires</taxon>
        <taxon>Primates</taxon>
        <taxon>Haplorrhini</taxon>
        <taxon>Catarrhini</taxon>
        <taxon>Cercopithecidae</taxon>
        <taxon>Cercopithecinae</taxon>
        <taxon>Macaca</taxon>
    </lineage>
</organism>
<feature type="chain" id="PRO_0000057850" description="Gap junction beta-1 protein">
    <location>
        <begin position="1"/>
        <end position="283"/>
    </location>
</feature>
<feature type="topological domain" description="Cytoplasmic" evidence="4">
    <location>
        <begin position="1"/>
        <end position="22"/>
    </location>
</feature>
<feature type="transmembrane region" description="Helical" evidence="4">
    <location>
        <begin position="23"/>
        <end position="45"/>
    </location>
</feature>
<feature type="topological domain" description="Extracellular" evidence="4">
    <location>
        <begin position="46"/>
        <end position="75"/>
    </location>
</feature>
<feature type="transmembrane region" description="Helical" evidence="4">
    <location>
        <begin position="76"/>
        <end position="95"/>
    </location>
</feature>
<feature type="topological domain" description="Cytoplasmic" evidence="4">
    <location>
        <begin position="96"/>
        <end position="130"/>
    </location>
</feature>
<feature type="transmembrane region" description="Helical" evidence="4">
    <location>
        <begin position="131"/>
        <end position="153"/>
    </location>
</feature>
<feature type="topological domain" description="Extracellular" evidence="4">
    <location>
        <begin position="154"/>
        <end position="191"/>
    </location>
</feature>
<feature type="transmembrane region" description="Helical" evidence="4">
    <location>
        <begin position="192"/>
        <end position="214"/>
    </location>
</feature>
<feature type="topological domain" description="Cytoplasmic" evidence="4">
    <location>
        <begin position="215"/>
        <end position="283"/>
    </location>
</feature>
<feature type="modified residue" description="Phosphoserine" evidence="2">
    <location>
        <position position="233"/>
    </location>
</feature>
<feature type="modified residue" description="Phosphoserine" evidence="3">
    <location>
        <position position="258"/>
    </location>
</feature>
<feature type="modified residue" description="Phosphoserine" evidence="3">
    <location>
        <position position="266"/>
    </location>
</feature>
<feature type="modified residue" description="Phosphoserine" evidence="3">
    <location>
        <position position="277"/>
    </location>
</feature>
<protein>
    <recommendedName>
        <fullName>Gap junction beta-1 protein</fullName>
    </recommendedName>
    <alternativeName>
        <fullName>Connexin-32</fullName>
        <shortName>Cx32</shortName>
    </alternativeName>
</protein>
<keyword id="KW-0965">Cell junction</keyword>
<keyword id="KW-1003">Cell membrane</keyword>
<keyword id="KW-0303">Gap junction</keyword>
<keyword id="KW-0472">Membrane</keyword>
<keyword id="KW-0597">Phosphoprotein</keyword>
<keyword id="KW-1185">Reference proteome</keyword>
<keyword id="KW-0812">Transmembrane</keyword>
<keyword id="KW-1133">Transmembrane helix</keyword>
<comment type="function">
    <text>One gap junction consists of a cluster of closely packed pairs of transmembrane channels, the connexons, through which materials of low MW diffuse from one cell to a neighboring cell.</text>
</comment>
<comment type="subunit">
    <text evidence="1">A connexon is composed of a hexamer of connexins. Interacts with CNST (By similarity).</text>
</comment>
<comment type="subcellular location">
    <subcellularLocation>
        <location>Cell membrane</location>
        <topology>Multi-pass membrane protein</topology>
    </subcellularLocation>
    <subcellularLocation>
        <location>Cell junction</location>
        <location>Gap junction</location>
    </subcellularLocation>
</comment>
<comment type="similarity">
    <text evidence="4">Belongs to the connexin family. Beta-type (group I) subfamily.</text>
</comment>
<proteinExistence type="evidence at transcript level"/>
<name>CXB1_MACFA</name>